<sequence length="730" mass="80915">MGRRKKMVERVTMLMNEPTKIRNIGIVAHIDHGKTTLSDNLLAGAGMISKELAGRQLFMDSDEEEQERGITIDSSNVSMVHNFDNEDYLINLIDTPGHVDFGGDVTRAMRAVDGAVVVVDAVEGTMPQTETVLRQALREHVRPVLFVNKVDRLINELKVDSQEMQIRLGKVIDHVNKLIKNMNPEKYKEGWRVDAAAGTVAFGSALYNWAISVPMMKKTGVSFKDVYDYCKAGDMKSLAEKCPLHEAVLDMVIHFLPDPIEAQKDRVKVIWHGDENSEIGTSMTHANADGDLAFMVTDISVDPHAGEVATGRLFSGSFSRGMEVFTSGTAKKSRVQQVSIFMGPERLEVDKIPAGNIAAVTGLKEAIVGSTVTTLDGMEPFESIRHVSEPVVTVAVEAKHTKDLPKLIEVLRQVAKEDPTLQITLDEETGEHLMAGMGELHLEVIAHRIERDKNVEITTSKPIVVYRETIKKKIEPVEGKSPNRHNRFYIYVEPLDLEIVSAIKSGEIHMNLPELERRQKLIDLGMEKEEAKGIVGIFNSNIFIDMTKGIQYLNETMELILDGFEEVMRAGPLTREPVANVKCVLVDAKLHEDAIHRGPAQVIPASRQAIQAGMLMADDTLLEPYQKVFVQVPQLLMGGATKELQGRRGIILNMSTEGDLAIIEARVPVAEMFGFAGEIRSATEGRAMWSTEFGGFDIVPTSIQNDIVGQIRERKGLKKELPKASDFLSI</sequence>
<name>EF2_METBF</name>
<accession>Q464Z3</accession>
<organism>
    <name type="scientific">Methanosarcina barkeri (strain Fusaro / DSM 804)</name>
    <dbReference type="NCBI Taxonomy" id="269797"/>
    <lineage>
        <taxon>Archaea</taxon>
        <taxon>Methanobacteriati</taxon>
        <taxon>Methanobacteriota</taxon>
        <taxon>Stenosarchaea group</taxon>
        <taxon>Methanomicrobia</taxon>
        <taxon>Methanosarcinales</taxon>
        <taxon>Methanosarcinaceae</taxon>
        <taxon>Methanosarcina</taxon>
    </lineage>
</organism>
<feature type="chain" id="PRO_0000225253" description="Elongation factor 2">
    <location>
        <begin position="1"/>
        <end position="730"/>
    </location>
</feature>
<feature type="domain" description="tr-type G">
    <location>
        <begin position="19"/>
        <end position="228"/>
    </location>
</feature>
<feature type="binding site" evidence="1">
    <location>
        <begin position="28"/>
        <end position="35"/>
    </location>
    <ligand>
        <name>GTP</name>
        <dbReference type="ChEBI" id="CHEBI:37565"/>
    </ligand>
</feature>
<feature type="binding site" evidence="1">
    <location>
        <begin position="94"/>
        <end position="98"/>
    </location>
    <ligand>
        <name>GTP</name>
        <dbReference type="ChEBI" id="CHEBI:37565"/>
    </ligand>
</feature>
<feature type="binding site" evidence="1">
    <location>
        <begin position="148"/>
        <end position="151"/>
    </location>
    <ligand>
        <name>GTP</name>
        <dbReference type="ChEBI" id="CHEBI:37565"/>
    </ligand>
</feature>
<feature type="modified residue" description="Diphthamide" evidence="1">
    <location>
        <position position="596"/>
    </location>
</feature>
<comment type="function">
    <text evidence="1">Catalyzes the GTP-dependent ribosomal translocation step during translation elongation. During this step, the ribosome changes from the pre-translocational (PRE) to the post-translocational (POST) state as the newly formed A-site-bound peptidyl-tRNA and P-site-bound deacylated tRNA move to the P and E sites, respectively. Catalyzes the coordinated movement of the two tRNA molecules, the mRNA and conformational changes in the ribosome.</text>
</comment>
<comment type="subcellular location">
    <subcellularLocation>
        <location evidence="1">Cytoplasm</location>
    </subcellularLocation>
</comment>
<comment type="similarity">
    <text evidence="1">Belongs to the TRAFAC class translation factor GTPase superfamily. Classic translation factor GTPase family. EF-G/EF-2 subfamily.</text>
</comment>
<keyword id="KW-0963">Cytoplasm</keyword>
<keyword id="KW-0251">Elongation factor</keyword>
<keyword id="KW-0342">GTP-binding</keyword>
<keyword id="KW-0547">Nucleotide-binding</keyword>
<keyword id="KW-0648">Protein biosynthesis</keyword>
<dbReference type="EMBL" id="CP000099">
    <property type="protein sequence ID" value="AAZ72549.1"/>
    <property type="molecule type" value="Genomic_DNA"/>
</dbReference>
<dbReference type="SMR" id="Q464Z3"/>
<dbReference type="STRING" id="269797.Mbar_A3686"/>
<dbReference type="PaxDb" id="269797-Mbar_A3686"/>
<dbReference type="KEGG" id="mba:Mbar_A3686"/>
<dbReference type="eggNOG" id="arCOG01559">
    <property type="taxonomic scope" value="Archaea"/>
</dbReference>
<dbReference type="HOGENOM" id="CLU_002794_11_1_2"/>
<dbReference type="OrthoDB" id="6290at2157"/>
<dbReference type="GO" id="GO:0005829">
    <property type="term" value="C:cytosol"/>
    <property type="evidence" value="ECO:0007669"/>
    <property type="project" value="TreeGrafter"/>
</dbReference>
<dbReference type="GO" id="GO:1990904">
    <property type="term" value="C:ribonucleoprotein complex"/>
    <property type="evidence" value="ECO:0007669"/>
    <property type="project" value="TreeGrafter"/>
</dbReference>
<dbReference type="GO" id="GO:0005525">
    <property type="term" value="F:GTP binding"/>
    <property type="evidence" value="ECO:0007669"/>
    <property type="project" value="UniProtKB-UniRule"/>
</dbReference>
<dbReference type="GO" id="GO:0003924">
    <property type="term" value="F:GTPase activity"/>
    <property type="evidence" value="ECO:0007669"/>
    <property type="project" value="InterPro"/>
</dbReference>
<dbReference type="GO" id="GO:0003746">
    <property type="term" value="F:translation elongation factor activity"/>
    <property type="evidence" value="ECO:0007669"/>
    <property type="project" value="UniProtKB-UniRule"/>
</dbReference>
<dbReference type="CDD" id="cd01681">
    <property type="entry name" value="aeEF2_snRNP_like_IV"/>
    <property type="match status" value="1"/>
</dbReference>
<dbReference type="CDD" id="cd16268">
    <property type="entry name" value="EF2_II"/>
    <property type="match status" value="1"/>
</dbReference>
<dbReference type="CDD" id="cd16261">
    <property type="entry name" value="EF2_snRNP_III"/>
    <property type="match status" value="1"/>
</dbReference>
<dbReference type="CDD" id="cd01514">
    <property type="entry name" value="Elongation_Factor_C"/>
    <property type="match status" value="1"/>
</dbReference>
<dbReference type="FunFam" id="3.30.230.10:FF:000009">
    <property type="entry name" value="116 kDa U5 small nuclear ribonucleoprotein component"/>
    <property type="match status" value="1"/>
</dbReference>
<dbReference type="FunFam" id="2.40.30.10:FF:000110">
    <property type="entry name" value="Elongation factor 2"/>
    <property type="match status" value="1"/>
</dbReference>
<dbReference type="FunFam" id="3.30.70.240:FF:000010">
    <property type="entry name" value="Elongation factor 2"/>
    <property type="match status" value="1"/>
</dbReference>
<dbReference type="FunFam" id="3.40.50.300:FF:000684">
    <property type="entry name" value="Elongation factor 2"/>
    <property type="match status" value="1"/>
</dbReference>
<dbReference type="FunFam" id="3.30.70.870:FF:000002">
    <property type="entry name" value="Translation elongation factor 2"/>
    <property type="match status" value="1"/>
</dbReference>
<dbReference type="Gene3D" id="3.30.230.10">
    <property type="match status" value="1"/>
</dbReference>
<dbReference type="Gene3D" id="3.30.70.240">
    <property type="match status" value="1"/>
</dbReference>
<dbReference type="Gene3D" id="3.30.70.870">
    <property type="entry name" value="Elongation Factor G (Translational Gtpase), domain 3"/>
    <property type="match status" value="1"/>
</dbReference>
<dbReference type="Gene3D" id="3.40.50.300">
    <property type="entry name" value="P-loop containing nucleotide triphosphate hydrolases"/>
    <property type="match status" value="1"/>
</dbReference>
<dbReference type="Gene3D" id="2.40.30.10">
    <property type="entry name" value="Translation factors"/>
    <property type="match status" value="1"/>
</dbReference>
<dbReference type="HAMAP" id="MF_00054_A">
    <property type="entry name" value="EF_G_EF_2_A"/>
    <property type="match status" value="1"/>
</dbReference>
<dbReference type="InterPro" id="IPR041095">
    <property type="entry name" value="EFG_II"/>
</dbReference>
<dbReference type="InterPro" id="IPR035647">
    <property type="entry name" value="EFG_III/V"/>
</dbReference>
<dbReference type="InterPro" id="IPR000640">
    <property type="entry name" value="EFG_V-like"/>
</dbReference>
<dbReference type="InterPro" id="IPR004161">
    <property type="entry name" value="EFTu-like_2"/>
</dbReference>
<dbReference type="InterPro" id="IPR031157">
    <property type="entry name" value="G_TR_CS"/>
</dbReference>
<dbReference type="InterPro" id="IPR027417">
    <property type="entry name" value="P-loop_NTPase"/>
</dbReference>
<dbReference type="InterPro" id="IPR020568">
    <property type="entry name" value="Ribosomal_Su5_D2-typ_SF"/>
</dbReference>
<dbReference type="InterPro" id="IPR014721">
    <property type="entry name" value="Ribsml_uS5_D2-typ_fold_subgr"/>
</dbReference>
<dbReference type="InterPro" id="IPR005225">
    <property type="entry name" value="Small_GTP-bd"/>
</dbReference>
<dbReference type="InterPro" id="IPR000795">
    <property type="entry name" value="T_Tr_GTP-bd_dom"/>
</dbReference>
<dbReference type="InterPro" id="IPR009000">
    <property type="entry name" value="Transl_B-barrel_sf"/>
</dbReference>
<dbReference type="InterPro" id="IPR004543">
    <property type="entry name" value="Transl_elong_EFG/EF2_arc"/>
</dbReference>
<dbReference type="InterPro" id="IPR005517">
    <property type="entry name" value="Transl_elong_EFG/EF2_IV"/>
</dbReference>
<dbReference type="NCBIfam" id="TIGR00490">
    <property type="entry name" value="aEF-2"/>
    <property type="match status" value="1"/>
</dbReference>
<dbReference type="NCBIfam" id="TIGR00231">
    <property type="entry name" value="small_GTP"/>
    <property type="match status" value="1"/>
</dbReference>
<dbReference type="PANTHER" id="PTHR42908:SF3">
    <property type="entry name" value="ELONGATION FACTOR-LIKE GTPASE 1"/>
    <property type="match status" value="1"/>
</dbReference>
<dbReference type="PANTHER" id="PTHR42908">
    <property type="entry name" value="TRANSLATION ELONGATION FACTOR-RELATED"/>
    <property type="match status" value="1"/>
</dbReference>
<dbReference type="Pfam" id="PF00679">
    <property type="entry name" value="EFG_C"/>
    <property type="match status" value="1"/>
</dbReference>
<dbReference type="Pfam" id="PF14492">
    <property type="entry name" value="EFG_III"/>
    <property type="match status" value="1"/>
</dbReference>
<dbReference type="Pfam" id="PF03764">
    <property type="entry name" value="EFG_IV"/>
    <property type="match status" value="1"/>
</dbReference>
<dbReference type="Pfam" id="PF00009">
    <property type="entry name" value="GTP_EFTU"/>
    <property type="match status" value="1"/>
</dbReference>
<dbReference type="Pfam" id="PF03144">
    <property type="entry name" value="GTP_EFTU_D2"/>
    <property type="match status" value="1"/>
</dbReference>
<dbReference type="PRINTS" id="PR00315">
    <property type="entry name" value="ELONGATNFCT"/>
</dbReference>
<dbReference type="SMART" id="SM00838">
    <property type="entry name" value="EFG_C"/>
    <property type="match status" value="1"/>
</dbReference>
<dbReference type="SMART" id="SM00889">
    <property type="entry name" value="EFG_IV"/>
    <property type="match status" value="1"/>
</dbReference>
<dbReference type="SUPFAM" id="SSF54980">
    <property type="entry name" value="EF-G C-terminal domain-like"/>
    <property type="match status" value="2"/>
</dbReference>
<dbReference type="SUPFAM" id="SSF52540">
    <property type="entry name" value="P-loop containing nucleoside triphosphate hydrolases"/>
    <property type="match status" value="1"/>
</dbReference>
<dbReference type="SUPFAM" id="SSF54211">
    <property type="entry name" value="Ribosomal protein S5 domain 2-like"/>
    <property type="match status" value="1"/>
</dbReference>
<dbReference type="SUPFAM" id="SSF50447">
    <property type="entry name" value="Translation proteins"/>
    <property type="match status" value="1"/>
</dbReference>
<dbReference type="PROSITE" id="PS00301">
    <property type="entry name" value="G_TR_1"/>
    <property type="match status" value="1"/>
</dbReference>
<dbReference type="PROSITE" id="PS51722">
    <property type="entry name" value="G_TR_2"/>
    <property type="match status" value="1"/>
</dbReference>
<proteinExistence type="inferred from homology"/>
<protein>
    <recommendedName>
        <fullName evidence="1">Elongation factor 2</fullName>
        <shortName evidence="1">EF-2</shortName>
    </recommendedName>
</protein>
<reference key="1">
    <citation type="journal article" date="2006" name="J. Bacteriol.">
        <title>The Methanosarcina barkeri genome: comparative analysis with Methanosarcina acetivorans and Methanosarcina mazei reveals extensive rearrangement within methanosarcinal genomes.</title>
        <authorList>
            <person name="Maeder D.L."/>
            <person name="Anderson I."/>
            <person name="Brettin T.S."/>
            <person name="Bruce D.C."/>
            <person name="Gilna P."/>
            <person name="Han C.S."/>
            <person name="Lapidus A."/>
            <person name="Metcalf W.W."/>
            <person name="Saunders E."/>
            <person name="Tapia R."/>
            <person name="Sowers K.R."/>
        </authorList>
    </citation>
    <scope>NUCLEOTIDE SEQUENCE [LARGE SCALE GENOMIC DNA]</scope>
    <source>
        <strain>Fusaro / DSM 804</strain>
    </source>
</reference>
<evidence type="ECO:0000255" key="1">
    <source>
        <dbReference type="HAMAP-Rule" id="MF_00054"/>
    </source>
</evidence>
<gene>
    <name evidence="1" type="primary">fusA</name>
    <name type="ordered locus">Mbar_A3686</name>
</gene>